<protein>
    <recommendedName>
        <fullName evidence="2">Elongation factor Tu</fullName>
        <shortName evidence="2">EF-Tu</shortName>
        <ecNumber evidence="2">3.6.5.3</ecNumber>
    </recommendedName>
</protein>
<comment type="function">
    <text evidence="2">GTP hydrolase that promotes the GTP-dependent binding of aminoacyl-tRNA to the A-site of ribosomes during protein biosynthesis.</text>
</comment>
<comment type="catalytic activity">
    <reaction evidence="2">
        <text>GTP + H2O = GDP + phosphate + H(+)</text>
        <dbReference type="Rhea" id="RHEA:19669"/>
        <dbReference type="ChEBI" id="CHEBI:15377"/>
        <dbReference type="ChEBI" id="CHEBI:15378"/>
        <dbReference type="ChEBI" id="CHEBI:37565"/>
        <dbReference type="ChEBI" id="CHEBI:43474"/>
        <dbReference type="ChEBI" id="CHEBI:58189"/>
        <dbReference type="EC" id="3.6.5.3"/>
    </reaction>
    <physiologicalReaction direction="left-to-right" evidence="2">
        <dbReference type="Rhea" id="RHEA:19670"/>
    </physiologicalReaction>
</comment>
<comment type="subunit">
    <text evidence="2">Monomer.</text>
</comment>
<comment type="subcellular location">
    <subcellularLocation>
        <location evidence="2">Cytoplasm</location>
    </subcellularLocation>
</comment>
<comment type="similarity">
    <text evidence="2">Belongs to the TRAFAC class translation factor GTPase superfamily. Classic translation factor GTPase family. EF-Tu/EF-1A subfamily.</text>
</comment>
<keyword id="KW-0963">Cytoplasm</keyword>
<keyword id="KW-0251">Elongation factor</keyword>
<keyword id="KW-0342">GTP-binding</keyword>
<keyword id="KW-0378">Hydrolase</keyword>
<keyword id="KW-0460">Magnesium</keyword>
<keyword id="KW-0479">Metal-binding</keyword>
<keyword id="KW-0547">Nucleotide-binding</keyword>
<keyword id="KW-0648">Protein biosynthesis</keyword>
<keyword id="KW-1185">Reference proteome</keyword>
<organism>
    <name type="scientific">Acidothermus cellulolyticus (strain ATCC 43068 / DSM 8971 / 11B)</name>
    <dbReference type="NCBI Taxonomy" id="351607"/>
    <lineage>
        <taxon>Bacteria</taxon>
        <taxon>Bacillati</taxon>
        <taxon>Actinomycetota</taxon>
        <taxon>Actinomycetes</taxon>
        <taxon>Acidothermales</taxon>
        <taxon>Acidothermaceae</taxon>
        <taxon>Acidothermus</taxon>
    </lineage>
</organism>
<feature type="chain" id="PRO_1000015597" description="Elongation factor Tu">
    <location>
        <begin position="1"/>
        <end position="397"/>
    </location>
</feature>
<feature type="domain" description="tr-type G">
    <location>
        <begin position="10"/>
        <end position="206"/>
    </location>
</feature>
<feature type="region of interest" description="G1" evidence="1">
    <location>
        <begin position="19"/>
        <end position="26"/>
    </location>
</feature>
<feature type="region of interest" description="G2" evidence="1">
    <location>
        <begin position="62"/>
        <end position="66"/>
    </location>
</feature>
<feature type="region of interest" description="G3" evidence="1">
    <location>
        <begin position="83"/>
        <end position="86"/>
    </location>
</feature>
<feature type="region of interest" description="G4" evidence="1">
    <location>
        <begin position="138"/>
        <end position="141"/>
    </location>
</feature>
<feature type="region of interest" description="G5" evidence="1">
    <location>
        <begin position="176"/>
        <end position="178"/>
    </location>
</feature>
<feature type="binding site" evidence="2">
    <location>
        <begin position="19"/>
        <end position="26"/>
    </location>
    <ligand>
        <name>GTP</name>
        <dbReference type="ChEBI" id="CHEBI:37565"/>
    </ligand>
</feature>
<feature type="binding site" evidence="2">
    <location>
        <position position="26"/>
    </location>
    <ligand>
        <name>Mg(2+)</name>
        <dbReference type="ChEBI" id="CHEBI:18420"/>
    </ligand>
</feature>
<feature type="binding site" evidence="2">
    <location>
        <begin position="83"/>
        <end position="87"/>
    </location>
    <ligand>
        <name>GTP</name>
        <dbReference type="ChEBI" id="CHEBI:37565"/>
    </ligand>
</feature>
<feature type="binding site" evidence="2">
    <location>
        <begin position="138"/>
        <end position="141"/>
    </location>
    <ligand>
        <name>GTP</name>
        <dbReference type="ChEBI" id="CHEBI:37565"/>
    </ligand>
</feature>
<dbReference type="EC" id="3.6.5.3" evidence="2"/>
<dbReference type="EMBL" id="CP000481">
    <property type="protein sequence ID" value="ABK52078.1"/>
    <property type="molecule type" value="Genomic_DNA"/>
</dbReference>
<dbReference type="RefSeq" id="WP_011719141.1">
    <property type="nucleotide sequence ID" value="NC_008578.1"/>
</dbReference>
<dbReference type="SMR" id="A0LRL8"/>
<dbReference type="FunCoup" id="A0LRL8">
    <property type="interactions" value="334"/>
</dbReference>
<dbReference type="STRING" id="351607.Acel_0304"/>
<dbReference type="KEGG" id="ace:Acel_0304"/>
<dbReference type="eggNOG" id="COG0050">
    <property type="taxonomic scope" value="Bacteria"/>
</dbReference>
<dbReference type="HOGENOM" id="CLU_007265_0_1_11"/>
<dbReference type="InParanoid" id="A0LRL8"/>
<dbReference type="OrthoDB" id="9803139at2"/>
<dbReference type="Proteomes" id="UP000008221">
    <property type="component" value="Chromosome"/>
</dbReference>
<dbReference type="GO" id="GO:0005829">
    <property type="term" value="C:cytosol"/>
    <property type="evidence" value="ECO:0007669"/>
    <property type="project" value="TreeGrafter"/>
</dbReference>
<dbReference type="GO" id="GO:0005525">
    <property type="term" value="F:GTP binding"/>
    <property type="evidence" value="ECO:0007669"/>
    <property type="project" value="UniProtKB-UniRule"/>
</dbReference>
<dbReference type="GO" id="GO:0003924">
    <property type="term" value="F:GTPase activity"/>
    <property type="evidence" value="ECO:0007669"/>
    <property type="project" value="InterPro"/>
</dbReference>
<dbReference type="GO" id="GO:0003746">
    <property type="term" value="F:translation elongation factor activity"/>
    <property type="evidence" value="ECO:0007669"/>
    <property type="project" value="UniProtKB-UniRule"/>
</dbReference>
<dbReference type="CDD" id="cd01884">
    <property type="entry name" value="EF_Tu"/>
    <property type="match status" value="1"/>
</dbReference>
<dbReference type="CDD" id="cd03697">
    <property type="entry name" value="EFTU_II"/>
    <property type="match status" value="1"/>
</dbReference>
<dbReference type="CDD" id="cd03707">
    <property type="entry name" value="EFTU_III"/>
    <property type="match status" value="1"/>
</dbReference>
<dbReference type="FunFam" id="2.40.30.10:FF:000001">
    <property type="entry name" value="Elongation factor Tu"/>
    <property type="match status" value="1"/>
</dbReference>
<dbReference type="FunFam" id="3.40.50.300:FF:000003">
    <property type="entry name" value="Elongation factor Tu"/>
    <property type="match status" value="1"/>
</dbReference>
<dbReference type="Gene3D" id="3.40.50.300">
    <property type="entry name" value="P-loop containing nucleotide triphosphate hydrolases"/>
    <property type="match status" value="1"/>
</dbReference>
<dbReference type="Gene3D" id="2.40.30.10">
    <property type="entry name" value="Translation factors"/>
    <property type="match status" value="2"/>
</dbReference>
<dbReference type="HAMAP" id="MF_00118_B">
    <property type="entry name" value="EF_Tu_B"/>
    <property type="match status" value="1"/>
</dbReference>
<dbReference type="InterPro" id="IPR041709">
    <property type="entry name" value="EF-Tu_GTP-bd"/>
</dbReference>
<dbReference type="InterPro" id="IPR050055">
    <property type="entry name" value="EF-Tu_GTPase"/>
</dbReference>
<dbReference type="InterPro" id="IPR004161">
    <property type="entry name" value="EFTu-like_2"/>
</dbReference>
<dbReference type="InterPro" id="IPR033720">
    <property type="entry name" value="EFTU_2"/>
</dbReference>
<dbReference type="InterPro" id="IPR031157">
    <property type="entry name" value="G_TR_CS"/>
</dbReference>
<dbReference type="InterPro" id="IPR027417">
    <property type="entry name" value="P-loop_NTPase"/>
</dbReference>
<dbReference type="InterPro" id="IPR005225">
    <property type="entry name" value="Small_GTP-bd"/>
</dbReference>
<dbReference type="InterPro" id="IPR000795">
    <property type="entry name" value="T_Tr_GTP-bd_dom"/>
</dbReference>
<dbReference type="InterPro" id="IPR009000">
    <property type="entry name" value="Transl_B-barrel_sf"/>
</dbReference>
<dbReference type="InterPro" id="IPR009001">
    <property type="entry name" value="Transl_elong_EF1A/Init_IF2_C"/>
</dbReference>
<dbReference type="InterPro" id="IPR004541">
    <property type="entry name" value="Transl_elong_EFTu/EF1A_bac/org"/>
</dbReference>
<dbReference type="InterPro" id="IPR004160">
    <property type="entry name" value="Transl_elong_EFTu/EF1A_C"/>
</dbReference>
<dbReference type="NCBIfam" id="TIGR00485">
    <property type="entry name" value="EF-Tu"/>
    <property type="match status" value="1"/>
</dbReference>
<dbReference type="NCBIfam" id="NF000766">
    <property type="entry name" value="PRK00049.1"/>
    <property type="match status" value="1"/>
</dbReference>
<dbReference type="NCBIfam" id="NF009372">
    <property type="entry name" value="PRK12735.1"/>
    <property type="match status" value="1"/>
</dbReference>
<dbReference type="NCBIfam" id="NF009373">
    <property type="entry name" value="PRK12736.1"/>
    <property type="match status" value="1"/>
</dbReference>
<dbReference type="NCBIfam" id="TIGR00231">
    <property type="entry name" value="small_GTP"/>
    <property type="match status" value="1"/>
</dbReference>
<dbReference type="PANTHER" id="PTHR43721:SF22">
    <property type="entry name" value="ELONGATION FACTOR TU, MITOCHONDRIAL"/>
    <property type="match status" value="1"/>
</dbReference>
<dbReference type="PANTHER" id="PTHR43721">
    <property type="entry name" value="ELONGATION FACTOR TU-RELATED"/>
    <property type="match status" value="1"/>
</dbReference>
<dbReference type="Pfam" id="PF00009">
    <property type="entry name" value="GTP_EFTU"/>
    <property type="match status" value="1"/>
</dbReference>
<dbReference type="Pfam" id="PF03144">
    <property type="entry name" value="GTP_EFTU_D2"/>
    <property type="match status" value="1"/>
</dbReference>
<dbReference type="Pfam" id="PF03143">
    <property type="entry name" value="GTP_EFTU_D3"/>
    <property type="match status" value="1"/>
</dbReference>
<dbReference type="PRINTS" id="PR00315">
    <property type="entry name" value="ELONGATNFCT"/>
</dbReference>
<dbReference type="SUPFAM" id="SSF50465">
    <property type="entry name" value="EF-Tu/eEF-1alpha/eIF2-gamma C-terminal domain"/>
    <property type="match status" value="1"/>
</dbReference>
<dbReference type="SUPFAM" id="SSF52540">
    <property type="entry name" value="P-loop containing nucleoside triphosphate hydrolases"/>
    <property type="match status" value="1"/>
</dbReference>
<dbReference type="SUPFAM" id="SSF50447">
    <property type="entry name" value="Translation proteins"/>
    <property type="match status" value="1"/>
</dbReference>
<dbReference type="PROSITE" id="PS00301">
    <property type="entry name" value="G_TR_1"/>
    <property type="match status" value="1"/>
</dbReference>
<dbReference type="PROSITE" id="PS51722">
    <property type="entry name" value="G_TR_2"/>
    <property type="match status" value="1"/>
</dbReference>
<evidence type="ECO:0000250" key="1"/>
<evidence type="ECO:0000255" key="2">
    <source>
        <dbReference type="HAMAP-Rule" id="MF_00118"/>
    </source>
</evidence>
<gene>
    <name evidence="2" type="primary">tuf</name>
    <name type="ordered locus">Acel_0304</name>
</gene>
<accession>A0LRL8</accession>
<proteinExistence type="inferred from homology"/>
<name>EFTU_ACIC1</name>
<reference key="1">
    <citation type="journal article" date="2009" name="Genome Res.">
        <title>Complete genome of the cellulolytic thermophile Acidothermus cellulolyticus 11B provides insights into its ecophysiological and evolutionary adaptations.</title>
        <authorList>
            <person name="Barabote R.D."/>
            <person name="Xie G."/>
            <person name="Leu D.H."/>
            <person name="Normand P."/>
            <person name="Necsulea A."/>
            <person name="Daubin V."/>
            <person name="Medigue C."/>
            <person name="Adney W.S."/>
            <person name="Xu X.C."/>
            <person name="Lapidus A."/>
            <person name="Parales R.E."/>
            <person name="Detter C."/>
            <person name="Pujic P."/>
            <person name="Bruce D."/>
            <person name="Lavire C."/>
            <person name="Challacombe J.F."/>
            <person name="Brettin T.S."/>
            <person name="Berry A.M."/>
        </authorList>
    </citation>
    <scope>NUCLEOTIDE SEQUENCE [LARGE SCALE GENOMIC DNA]</scope>
    <source>
        <strain>ATCC 43068 / DSM 8971 / 11B</strain>
    </source>
</reference>
<sequence length="397" mass="44053">MAKAKFERTKPHVNIGTIGHIDHGKTTLTAAITKVLHDQNPDINPYTPFEQIDKAPEERARGITISIAHVEYQTEKRHYAHVDCPGHADYIKNMITGAAQMDGAILVVSAADGPMPQTKEHVLLARQVGVPYIVVALNKADVVDDEEILQLVELEVRELLNSYEFPGDDVPVVRVSALKALEGDPKWTQSILDLLKACDDYIPEPVREIDKPFLMPIEDVFTITGRGTVVTGRVERGVVKVGDEVEIVGIHPKTLKTTVTGVEMFRKLLDEGRAGDNIGVLLRGIKREEVERGQVVCKPGSITPHTEFEAQVYVLSKDEGGRHTPFFNNYRPQFYFRTTDVTGVVHLPEGTEMVMPGDNTEMRVELIQPIAMEEGLRFAIREGGRTVGAGRVTKILK</sequence>